<gene>
    <name type="primary">TCEANC2</name>
    <name type="synonym">C1orf83</name>
</gene>
<comment type="interaction">
    <interactant intactId="EBI-5462748">
        <id>Q96MN5</id>
    </interactant>
    <interactant intactId="EBI-741181">
        <id>Q6RW13</id>
        <label>AGTRAP</label>
    </interactant>
    <organismsDiffer>false</organismsDiffer>
    <experiments>3</experiments>
</comment>
<comment type="interaction">
    <interactant intactId="EBI-5462748">
        <id>Q96MN5</id>
    </interactant>
    <interactant intactId="EBI-79165">
        <id>Q9NRD5</id>
        <label>PICK1</label>
    </interactant>
    <organismsDiffer>false</organismsDiffer>
    <experiments>3</experiments>
</comment>
<comment type="interaction">
    <interactant intactId="EBI-5462748">
        <id>Q96MN5</id>
    </interactant>
    <interactant intactId="EBI-357849">
        <id>Q15025</id>
        <label>TNIP1</label>
    </interactant>
    <organismsDiffer>false</organismsDiffer>
    <experiments>4</experiments>
</comment>
<comment type="subcellular location">
    <subcellularLocation>
        <location evidence="1 2">Nucleus</location>
    </subcellularLocation>
</comment>
<comment type="alternative products">
    <event type="alternative splicing"/>
    <isoform>
        <id>Q96MN5-1</id>
        <name>1</name>
        <sequence type="displayed"/>
    </isoform>
    <isoform>
        <id>Q96MN5-2</id>
        <name>2</name>
        <sequence type="described" ref="VSP_025096"/>
    </isoform>
</comment>
<comment type="similarity">
    <text evidence="5">Belongs to the TCEANC2 family.</text>
</comment>
<accession>Q96MN5</accession>
<accession>Q5T702</accession>
<accession>Q8N8N2</accession>
<name>TEAN2_HUMAN</name>
<sequence length="208" mass="24150">MDKFVIRTPRIQNSPQKKDSGGKVYKQATIESLKRVVVVEDIKRWKTMLELPDQTKENLVEALQELKKKIPSREVLKSTRIGHTVNKMRKHSDSEVASLAREVYTEWKTFTEKHSNRPSIEVRSDPKTESLRKNAQKLLSEALELKMDHLLVENIERETFHLCSRLINGPYRRTVRALVFTLKHRAEIRAQVKSGSLPVGTFVQTHKK</sequence>
<dbReference type="EMBL" id="AK056674">
    <property type="protein sequence ID" value="BAB71250.1"/>
    <property type="molecule type" value="mRNA"/>
</dbReference>
<dbReference type="EMBL" id="AK096488">
    <property type="protein sequence ID" value="BAC04803.1"/>
    <property type="molecule type" value="mRNA"/>
</dbReference>
<dbReference type="EMBL" id="AL353898">
    <property type="status" value="NOT_ANNOTATED_CDS"/>
    <property type="molecule type" value="Genomic_DNA"/>
</dbReference>
<dbReference type="EMBL" id="BC035374">
    <property type="protein sequence ID" value="AAH35374.1"/>
    <property type="molecule type" value="mRNA"/>
</dbReference>
<dbReference type="CCDS" id="CCDS587.1">
    <molecule id="Q96MN5-1"/>
</dbReference>
<dbReference type="RefSeq" id="NP_694580.1">
    <molecule id="Q96MN5-1"/>
    <property type="nucleotide sequence ID" value="NM_153035.3"/>
</dbReference>
<dbReference type="SMR" id="Q96MN5"/>
<dbReference type="BioGRID" id="126058">
    <property type="interactions" value="33"/>
</dbReference>
<dbReference type="FunCoup" id="Q96MN5">
    <property type="interactions" value="2392"/>
</dbReference>
<dbReference type="IntAct" id="Q96MN5">
    <property type="interactions" value="27"/>
</dbReference>
<dbReference type="STRING" id="9606.ENSP00000234827"/>
<dbReference type="GlyGen" id="Q96MN5">
    <property type="glycosylation" value="1 site, 1 O-linked glycan (1 site)"/>
</dbReference>
<dbReference type="iPTMnet" id="Q96MN5"/>
<dbReference type="PhosphoSitePlus" id="Q96MN5"/>
<dbReference type="BioMuta" id="TCEANC2"/>
<dbReference type="DMDM" id="74752040"/>
<dbReference type="jPOST" id="Q96MN5"/>
<dbReference type="MassIVE" id="Q96MN5"/>
<dbReference type="PaxDb" id="9606-ENSP00000234827"/>
<dbReference type="PeptideAtlas" id="Q96MN5"/>
<dbReference type="ProteomicsDB" id="77381">
    <molecule id="Q96MN5-1"/>
</dbReference>
<dbReference type="ProteomicsDB" id="77382">
    <molecule id="Q96MN5-2"/>
</dbReference>
<dbReference type="Pumba" id="Q96MN5"/>
<dbReference type="Antibodypedia" id="33160">
    <property type="antibodies" value="158 antibodies from 19 providers"/>
</dbReference>
<dbReference type="DNASU" id="127428"/>
<dbReference type="Ensembl" id="ENST00000234827.6">
    <molecule id="Q96MN5-1"/>
    <property type="protein sequence ID" value="ENSP00000234827.1"/>
    <property type="gene ID" value="ENSG00000116205.14"/>
</dbReference>
<dbReference type="Ensembl" id="ENST00000648983.1">
    <molecule id="Q96MN5-1"/>
    <property type="protein sequence ID" value="ENSP00000498109.1"/>
    <property type="gene ID" value="ENSG00000116205.14"/>
</dbReference>
<dbReference type="GeneID" id="127428"/>
<dbReference type="KEGG" id="hsa:127428"/>
<dbReference type="MANE-Select" id="ENST00000234827.6">
    <property type="protein sequence ID" value="ENSP00000234827.1"/>
    <property type="RefSeq nucleotide sequence ID" value="NM_153035.3"/>
    <property type="RefSeq protein sequence ID" value="NP_694580.1"/>
</dbReference>
<dbReference type="UCSC" id="uc001cwt.2">
    <molecule id="Q96MN5-1"/>
    <property type="organism name" value="human"/>
</dbReference>
<dbReference type="AGR" id="HGNC:26494"/>
<dbReference type="CTD" id="127428"/>
<dbReference type="DisGeNET" id="127428"/>
<dbReference type="GeneCards" id="TCEANC2"/>
<dbReference type="HGNC" id="HGNC:26494">
    <property type="gene designation" value="TCEANC2"/>
</dbReference>
<dbReference type="HPA" id="ENSG00000116205">
    <property type="expression patterns" value="Low tissue specificity"/>
</dbReference>
<dbReference type="neXtProt" id="NX_Q96MN5"/>
<dbReference type="OpenTargets" id="ENSG00000116205"/>
<dbReference type="PharmGKB" id="PA142672531"/>
<dbReference type="VEuPathDB" id="HostDB:ENSG00000116205"/>
<dbReference type="eggNOG" id="KOG1105">
    <property type="taxonomic scope" value="Eukaryota"/>
</dbReference>
<dbReference type="GeneTree" id="ENSGT00390000014384"/>
<dbReference type="HOGENOM" id="CLU_086873_0_0_1"/>
<dbReference type="InParanoid" id="Q96MN5"/>
<dbReference type="OrthoDB" id="44867at2759"/>
<dbReference type="PAN-GO" id="Q96MN5">
    <property type="GO annotations" value="2 GO annotations based on evolutionary models"/>
</dbReference>
<dbReference type="PhylomeDB" id="Q96MN5"/>
<dbReference type="TreeFam" id="TF331911"/>
<dbReference type="PathwayCommons" id="Q96MN5"/>
<dbReference type="SignaLink" id="Q96MN5"/>
<dbReference type="BioGRID-ORCS" id="127428">
    <property type="hits" value="9 hits in 1150 CRISPR screens"/>
</dbReference>
<dbReference type="ChiTaRS" id="TCEANC2">
    <property type="organism name" value="human"/>
</dbReference>
<dbReference type="GenomeRNAi" id="127428"/>
<dbReference type="Pharos" id="Q96MN5">
    <property type="development level" value="Tdark"/>
</dbReference>
<dbReference type="PRO" id="PR:Q96MN5"/>
<dbReference type="Proteomes" id="UP000005640">
    <property type="component" value="Chromosome 1"/>
</dbReference>
<dbReference type="RNAct" id="Q96MN5">
    <property type="molecule type" value="protein"/>
</dbReference>
<dbReference type="Bgee" id="ENSG00000116205">
    <property type="expression patterns" value="Expressed in sperm and 113 other cell types or tissues"/>
</dbReference>
<dbReference type="ExpressionAtlas" id="Q96MN5">
    <property type="expression patterns" value="baseline and differential"/>
</dbReference>
<dbReference type="GO" id="GO:0005634">
    <property type="term" value="C:nucleus"/>
    <property type="evidence" value="ECO:0000318"/>
    <property type="project" value="GO_Central"/>
</dbReference>
<dbReference type="GO" id="GO:0006351">
    <property type="term" value="P:DNA-templated transcription"/>
    <property type="evidence" value="ECO:0007669"/>
    <property type="project" value="InterPro"/>
</dbReference>
<dbReference type="GO" id="GO:0006357">
    <property type="term" value="P:regulation of transcription by RNA polymerase II"/>
    <property type="evidence" value="ECO:0000318"/>
    <property type="project" value="GO_Central"/>
</dbReference>
<dbReference type="CDD" id="cd00183">
    <property type="entry name" value="TFIIS_I"/>
    <property type="match status" value="1"/>
</dbReference>
<dbReference type="Gene3D" id="1.20.930.10">
    <property type="entry name" value="Conserved domain common to transcription factors TFIIS, elongin A, CRSP70"/>
    <property type="match status" value="1"/>
</dbReference>
<dbReference type="Gene3D" id="1.10.472.30">
    <property type="entry name" value="Transcription elongation factor S-II, central domain"/>
    <property type="match status" value="1"/>
</dbReference>
<dbReference type="InterPro" id="IPR003617">
    <property type="entry name" value="TFIIS/CRSP70_N_sub"/>
</dbReference>
<dbReference type="InterPro" id="IPR035441">
    <property type="entry name" value="TFIIS/LEDGF_dom_sf"/>
</dbReference>
<dbReference type="InterPro" id="IPR003618">
    <property type="entry name" value="TFIIS_cen_dom"/>
</dbReference>
<dbReference type="InterPro" id="IPR036575">
    <property type="entry name" value="TFIIS_cen_dom_sf"/>
</dbReference>
<dbReference type="InterPro" id="IPR017923">
    <property type="entry name" value="TFIIS_N"/>
</dbReference>
<dbReference type="PANTHER" id="PTHR11477:SF14">
    <property type="entry name" value="TRANSCRIPTION ELONGATION FACTOR A N-TERMINAL AND CENTRAL DOMAIN-CONTAINING PROTEIN 2"/>
    <property type="match status" value="1"/>
</dbReference>
<dbReference type="PANTHER" id="PTHR11477">
    <property type="entry name" value="TRANSCRIPTION FACTOR S-II ZINC FINGER DOMAIN-CONTAINING PROTEIN"/>
    <property type="match status" value="1"/>
</dbReference>
<dbReference type="Pfam" id="PF08711">
    <property type="entry name" value="Med26"/>
    <property type="match status" value="1"/>
</dbReference>
<dbReference type="SMART" id="SM00509">
    <property type="entry name" value="TFS2N"/>
    <property type="match status" value="1"/>
</dbReference>
<dbReference type="SUPFAM" id="SSF47676">
    <property type="entry name" value="Conserved domain common to transcription factors TFIIS, elongin A, CRSP70"/>
    <property type="match status" value="1"/>
</dbReference>
<dbReference type="SUPFAM" id="SSF46942">
    <property type="entry name" value="Elongation factor TFIIS domain 2"/>
    <property type="match status" value="1"/>
</dbReference>
<dbReference type="PROSITE" id="PS51321">
    <property type="entry name" value="TFIIS_CENTRAL"/>
    <property type="match status" value="1"/>
</dbReference>
<dbReference type="PROSITE" id="PS51319">
    <property type="entry name" value="TFIIS_N"/>
    <property type="match status" value="1"/>
</dbReference>
<reference key="1">
    <citation type="journal article" date="2004" name="Nat. Genet.">
        <title>Complete sequencing and characterization of 21,243 full-length human cDNAs.</title>
        <authorList>
            <person name="Ota T."/>
            <person name="Suzuki Y."/>
            <person name="Nishikawa T."/>
            <person name="Otsuki T."/>
            <person name="Sugiyama T."/>
            <person name="Irie R."/>
            <person name="Wakamatsu A."/>
            <person name="Hayashi K."/>
            <person name="Sato H."/>
            <person name="Nagai K."/>
            <person name="Kimura K."/>
            <person name="Makita H."/>
            <person name="Sekine M."/>
            <person name="Obayashi M."/>
            <person name="Nishi T."/>
            <person name="Shibahara T."/>
            <person name="Tanaka T."/>
            <person name="Ishii S."/>
            <person name="Yamamoto J."/>
            <person name="Saito K."/>
            <person name="Kawai Y."/>
            <person name="Isono Y."/>
            <person name="Nakamura Y."/>
            <person name="Nagahari K."/>
            <person name="Murakami K."/>
            <person name="Yasuda T."/>
            <person name="Iwayanagi T."/>
            <person name="Wagatsuma M."/>
            <person name="Shiratori A."/>
            <person name="Sudo H."/>
            <person name="Hosoiri T."/>
            <person name="Kaku Y."/>
            <person name="Kodaira H."/>
            <person name="Kondo H."/>
            <person name="Sugawara M."/>
            <person name="Takahashi M."/>
            <person name="Kanda K."/>
            <person name="Yokoi T."/>
            <person name="Furuya T."/>
            <person name="Kikkawa E."/>
            <person name="Omura Y."/>
            <person name="Abe K."/>
            <person name="Kamihara K."/>
            <person name="Katsuta N."/>
            <person name="Sato K."/>
            <person name="Tanikawa M."/>
            <person name="Yamazaki M."/>
            <person name="Ninomiya K."/>
            <person name="Ishibashi T."/>
            <person name="Yamashita H."/>
            <person name="Murakawa K."/>
            <person name="Fujimori K."/>
            <person name="Tanai H."/>
            <person name="Kimata M."/>
            <person name="Watanabe M."/>
            <person name="Hiraoka S."/>
            <person name="Chiba Y."/>
            <person name="Ishida S."/>
            <person name="Ono Y."/>
            <person name="Takiguchi S."/>
            <person name="Watanabe S."/>
            <person name="Yosida M."/>
            <person name="Hotuta T."/>
            <person name="Kusano J."/>
            <person name="Kanehori K."/>
            <person name="Takahashi-Fujii A."/>
            <person name="Hara H."/>
            <person name="Tanase T.-O."/>
            <person name="Nomura Y."/>
            <person name="Togiya S."/>
            <person name="Komai F."/>
            <person name="Hara R."/>
            <person name="Takeuchi K."/>
            <person name="Arita M."/>
            <person name="Imose N."/>
            <person name="Musashino K."/>
            <person name="Yuuki H."/>
            <person name="Oshima A."/>
            <person name="Sasaki N."/>
            <person name="Aotsuka S."/>
            <person name="Yoshikawa Y."/>
            <person name="Matsunawa H."/>
            <person name="Ichihara T."/>
            <person name="Shiohata N."/>
            <person name="Sano S."/>
            <person name="Moriya S."/>
            <person name="Momiyama H."/>
            <person name="Satoh N."/>
            <person name="Takami S."/>
            <person name="Terashima Y."/>
            <person name="Suzuki O."/>
            <person name="Nakagawa S."/>
            <person name="Senoh A."/>
            <person name="Mizoguchi H."/>
            <person name="Goto Y."/>
            <person name="Shimizu F."/>
            <person name="Wakebe H."/>
            <person name="Hishigaki H."/>
            <person name="Watanabe T."/>
            <person name="Sugiyama A."/>
            <person name="Takemoto M."/>
            <person name="Kawakami B."/>
            <person name="Yamazaki M."/>
            <person name="Watanabe K."/>
            <person name="Kumagai A."/>
            <person name="Itakura S."/>
            <person name="Fukuzumi Y."/>
            <person name="Fujimori Y."/>
            <person name="Komiyama M."/>
            <person name="Tashiro H."/>
            <person name="Tanigami A."/>
            <person name="Fujiwara T."/>
            <person name="Ono T."/>
            <person name="Yamada K."/>
            <person name="Fujii Y."/>
            <person name="Ozaki K."/>
            <person name="Hirao M."/>
            <person name="Ohmori Y."/>
            <person name="Kawabata A."/>
            <person name="Hikiji T."/>
            <person name="Kobatake N."/>
            <person name="Inagaki H."/>
            <person name="Ikema Y."/>
            <person name="Okamoto S."/>
            <person name="Okitani R."/>
            <person name="Kawakami T."/>
            <person name="Noguchi S."/>
            <person name="Itoh T."/>
            <person name="Shigeta K."/>
            <person name="Senba T."/>
            <person name="Matsumura K."/>
            <person name="Nakajima Y."/>
            <person name="Mizuno T."/>
            <person name="Morinaga M."/>
            <person name="Sasaki M."/>
            <person name="Togashi T."/>
            <person name="Oyama M."/>
            <person name="Hata H."/>
            <person name="Watanabe M."/>
            <person name="Komatsu T."/>
            <person name="Mizushima-Sugano J."/>
            <person name="Satoh T."/>
            <person name="Shirai Y."/>
            <person name="Takahashi Y."/>
            <person name="Nakagawa K."/>
            <person name="Okumura K."/>
            <person name="Nagase T."/>
            <person name="Nomura N."/>
            <person name="Kikuchi H."/>
            <person name="Masuho Y."/>
            <person name="Yamashita R."/>
            <person name="Nakai K."/>
            <person name="Yada T."/>
            <person name="Nakamura Y."/>
            <person name="Ohara O."/>
            <person name="Isogai T."/>
            <person name="Sugano S."/>
        </authorList>
    </citation>
    <scope>NUCLEOTIDE SEQUENCE [LARGE SCALE MRNA] (ISOFORMS 1 AND 2)</scope>
    <source>
        <tissue>Brain</tissue>
    </source>
</reference>
<reference key="2">
    <citation type="journal article" date="2006" name="Nature">
        <title>The DNA sequence and biological annotation of human chromosome 1.</title>
        <authorList>
            <person name="Gregory S.G."/>
            <person name="Barlow K.F."/>
            <person name="McLay K.E."/>
            <person name="Kaul R."/>
            <person name="Swarbreck D."/>
            <person name="Dunham A."/>
            <person name="Scott C.E."/>
            <person name="Howe K.L."/>
            <person name="Woodfine K."/>
            <person name="Spencer C.C.A."/>
            <person name="Jones M.C."/>
            <person name="Gillson C."/>
            <person name="Searle S."/>
            <person name="Zhou Y."/>
            <person name="Kokocinski F."/>
            <person name="McDonald L."/>
            <person name="Evans R."/>
            <person name="Phillips K."/>
            <person name="Atkinson A."/>
            <person name="Cooper R."/>
            <person name="Jones C."/>
            <person name="Hall R.E."/>
            <person name="Andrews T.D."/>
            <person name="Lloyd C."/>
            <person name="Ainscough R."/>
            <person name="Almeida J.P."/>
            <person name="Ambrose K.D."/>
            <person name="Anderson F."/>
            <person name="Andrew R.W."/>
            <person name="Ashwell R.I.S."/>
            <person name="Aubin K."/>
            <person name="Babbage A.K."/>
            <person name="Bagguley C.L."/>
            <person name="Bailey J."/>
            <person name="Beasley H."/>
            <person name="Bethel G."/>
            <person name="Bird C.P."/>
            <person name="Bray-Allen S."/>
            <person name="Brown J.Y."/>
            <person name="Brown A.J."/>
            <person name="Buckley D."/>
            <person name="Burton J."/>
            <person name="Bye J."/>
            <person name="Carder C."/>
            <person name="Chapman J.C."/>
            <person name="Clark S.Y."/>
            <person name="Clarke G."/>
            <person name="Clee C."/>
            <person name="Cobley V."/>
            <person name="Collier R.E."/>
            <person name="Corby N."/>
            <person name="Coville G.J."/>
            <person name="Davies J."/>
            <person name="Deadman R."/>
            <person name="Dunn M."/>
            <person name="Earthrowl M."/>
            <person name="Ellington A.G."/>
            <person name="Errington H."/>
            <person name="Frankish A."/>
            <person name="Frankland J."/>
            <person name="French L."/>
            <person name="Garner P."/>
            <person name="Garnett J."/>
            <person name="Gay L."/>
            <person name="Ghori M.R.J."/>
            <person name="Gibson R."/>
            <person name="Gilby L.M."/>
            <person name="Gillett W."/>
            <person name="Glithero R.J."/>
            <person name="Grafham D.V."/>
            <person name="Griffiths C."/>
            <person name="Griffiths-Jones S."/>
            <person name="Grocock R."/>
            <person name="Hammond S."/>
            <person name="Harrison E.S.I."/>
            <person name="Hart E."/>
            <person name="Haugen E."/>
            <person name="Heath P.D."/>
            <person name="Holmes S."/>
            <person name="Holt K."/>
            <person name="Howden P.J."/>
            <person name="Hunt A.R."/>
            <person name="Hunt S.E."/>
            <person name="Hunter G."/>
            <person name="Isherwood J."/>
            <person name="James R."/>
            <person name="Johnson C."/>
            <person name="Johnson D."/>
            <person name="Joy A."/>
            <person name="Kay M."/>
            <person name="Kershaw J.K."/>
            <person name="Kibukawa M."/>
            <person name="Kimberley A.M."/>
            <person name="King A."/>
            <person name="Knights A.J."/>
            <person name="Lad H."/>
            <person name="Laird G."/>
            <person name="Lawlor S."/>
            <person name="Leongamornlert D.A."/>
            <person name="Lloyd D.M."/>
            <person name="Loveland J."/>
            <person name="Lovell J."/>
            <person name="Lush M.J."/>
            <person name="Lyne R."/>
            <person name="Martin S."/>
            <person name="Mashreghi-Mohammadi M."/>
            <person name="Matthews L."/>
            <person name="Matthews N.S.W."/>
            <person name="McLaren S."/>
            <person name="Milne S."/>
            <person name="Mistry S."/>
            <person name="Moore M.J.F."/>
            <person name="Nickerson T."/>
            <person name="O'Dell C.N."/>
            <person name="Oliver K."/>
            <person name="Palmeiri A."/>
            <person name="Palmer S.A."/>
            <person name="Parker A."/>
            <person name="Patel D."/>
            <person name="Pearce A.V."/>
            <person name="Peck A.I."/>
            <person name="Pelan S."/>
            <person name="Phelps K."/>
            <person name="Phillimore B.J."/>
            <person name="Plumb R."/>
            <person name="Rajan J."/>
            <person name="Raymond C."/>
            <person name="Rouse G."/>
            <person name="Saenphimmachak C."/>
            <person name="Sehra H.K."/>
            <person name="Sheridan E."/>
            <person name="Shownkeen R."/>
            <person name="Sims S."/>
            <person name="Skuce C.D."/>
            <person name="Smith M."/>
            <person name="Steward C."/>
            <person name="Subramanian S."/>
            <person name="Sycamore N."/>
            <person name="Tracey A."/>
            <person name="Tromans A."/>
            <person name="Van Helmond Z."/>
            <person name="Wall M."/>
            <person name="Wallis J.M."/>
            <person name="White S."/>
            <person name="Whitehead S.L."/>
            <person name="Wilkinson J.E."/>
            <person name="Willey D.L."/>
            <person name="Williams H."/>
            <person name="Wilming L."/>
            <person name="Wray P.W."/>
            <person name="Wu Z."/>
            <person name="Coulson A."/>
            <person name="Vaudin M."/>
            <person name="Sulston J.E."/>
            <person name="Durbin R.M."/>
            <person name="Hubbard T."/>
            <person name="Wooster R."/>
            <person name="Dunham I."/>
            <person name="Carter N.P."/>
            <person name="McVean G."/>
            <person name="Ross M.T."/>
            <person name="Harrow J."/>
            <person name="Olson M.V."/>
            <person name="Beck S."/>
            <person name="Rogers J."/>
            <person name="Bentley D.R."/>
        </authorList>
    </citation>
    <scope>NUCLEOTIDE SEQUENCE [LARGE SCALE GENOMIC DNA]</scope>
</reference>
<reference key="3">
    <citation type="journal article" date="2004" name="Genome Res.">
        <title>The status, quality, and expansion of the NIH full-length cDNA project: the Mammalian Gene Collection (MGC).</title>
        <authorList>
            <consortium name="The MGC Project Team"/>
        </authorList>
    </citation>
    <scope>NUCLEOTIDE SEQUENCE [LARGE SCALE MRNA] (ISOFORM 1)</scope>
    <source>
        <tissue>Brain</tissue>
    </source>
</reference>
<reference key="4">
    <citation type="journal article" date="2011" name="BMC Syst. Biol.">
        <title>Initial characterization of the human central proteome.</title>
        <authorList>
            <person name="Burkard T.R."/>
            <person name="Planyavsky M."/>
            <person name="Kaupe I."/>
            <person name="Breitwieser F.P."/>
            <person name="Buerckstuemmer T."/>
            <person name="Bennett K.L."/>
            <person name="Superti-Furga G."/>
            <person name="Colinge J."/>
        </authorList>
    </citation>
    <scope>IDENTIFICATION BY MASS SPECTROMETRY [LARGE SCALE ANALYSIS]</scope>
</reference>
<reference key="5">
    <citation type="journal article" date="2012" name="Proc. Natl. Acad. Sci. U.S.A.">
        <title>N-terminal acetylome analyses and functional insights of the N-terminal acetyltransferase NatB.</title>
        <authorList>
            <person name="Van Damme P."/>
            <person name="Lasa M."/>
            <person name="Polevoda B."/>
            <person name="Gazquez C."/>
            <person name="Elosegui-Artola A."/>
            <person name="Kim D.S."/>
            <person name="De Juan-Pardo E."/>
            <person name="Demeyer K."/>
            <person name="Hole K."/>
            <person name="Larrea E."/>
            <person name="Timmerman E."/>
            <person name="Prieto J."/>
            <person name="Arnesen T."/>
            <person name="Sherman F."/>
            <person name="Gevaert K."/>
            <person name="Aldabe R."/>
        </authorList>
    </citation>
    <scope>ACETYLATION [LARGE SCALE ANALYSIS] AT MET-1</scope>
    <scope>IDENTIFICATION BY MASS SPECTROMETRY [LARGE SCALE ANALYSIS]</scope>
</reference>
<organism>
    <name type="scientific">Homo sapiens</name>
    <name type="common">Human</name>
    <dbReference type="NCBI Taxonomy" id="9606"/>
    <lineage>
        <taxon>Eukaryota</taxon>
        <taxon>Metazoa</taxon>
        <taxon>Chordata</taxon>
        <taxon>Craniata</taxon>
        <taxon>Vertebrata</taxon>
        <taxon>Euteleostomi</taxon>
        <taxon>Mammalia</taxon>
        <taxon>Eutheria</taxon>
        <taxon>Euarchontoglires</taxon>
        <taxon>Primates</taxon>
        <taxon>Haplorrhini</taxon>
        <taxon>Catarrhini</taxon>
        <taxon>Hominidae</taxon>
        <taxon>Homo</taxon>
    </lineage>
</organism>
<proteinExistence type="evidence at protein level"/>
<protein>
    <recommendedName>
        <fullName>Transcription elongation factor A N-terminal and central domain-containing protein 2</fullName>
    </recommendedName>
</protein>
<evidence type="ECO:0000255" key="1">
    <source>
        <dbReference type="PROSITE-ProRule" id="PRU00649"/>
    </source>
</evidence>
<evidence type="ECO:0000255" key="2">
    <source>
        <dbReference type="PROSITE-ProRule" id="PRU00651"/>
    </source>
</evidence>
<evidence type="ECO:0000256" key="3">
    <source>
        <dbReference type="SAM" id="MobiDB-lite"/>
    </source>
</evidence>
<evidence type="ECO:0000303" key="4">
    <source>
    </source>
</evidence>
<evidence type="ECO:0000305" key="5"/>
<evidence type="ECO:0007744" key="6">
    <source>
    </source>
</evidence>
<keyword id="KW-0007">Acetylation</keyword>
<keyword id="KW-0025">Alternative splicing</keyword>
<keyword id="KW-0539">Nucleus</keyword>
<keyword id="KW-1267">Proteomics identification</keyword>
<keyword id="KW-1185">Reference proteome</keyword>
<feature type="chain" id="PRO_0000286574" description="Transcription elongation factor A N-terminal and central domain-containing protein 2">
    <location>
        <begin position="1"/>
        <end position="208"/>
    </location>
</feature>
<feature type="domain" description="TFIIS N-terminal" evidence="1">
    <location>
        <begin position="40"/>
        <end position="114"/>
    </location>
</feature>
<feature type="domain" description="TFIIS central" evidence="2">
    <location>
        <begin position="131"/>
        <end position="208"/>
    </location>
</feature>
<feature type="region of interest" description="Disordered" evidence="3">
    <location>
        <begin position="1"/>
        <end position="21"/>
    </location>
</feature>
<feature type="modified residue" description="N-acetylmethionine" evidence="6">
    <location>
        <position position="1"/>
    </location>
</feature>
<feature type="splice variant" id="VSP_025096" description="In isoform 2." evidence="4">
    <location>
        <begin position="1"/>
        <end position="87"/>
    </location>
</feature>
<feature type="sequence conflict" description="In Ref. 1; BAC04803." evidence="5" ref="1">
    <original>H</original>
    <variation>R</variation>
    <location>
        <position position="161"/>
    </location>
</feature>